<proteinExistence type="inferred from homology"/>
<comment type="subcellular location">
    <subcellularLocation>
        <location evidence="1">Cell membrane</location>
        <topology evidence="1">Multi-pass membrane protein</topology>
    </subcellularLocation>
</comment>
<comment type="similarity">
    <text evidence="1">Belongs to the UPF0391 family.</text>
</comment>
<protein>
    <recommendedName>
        <fullName evidence="1">UPF0391 membrane protein YpAngola_A0835</fullName>
    </recommendedName>
</protein>
<name>Y835_YERPG</name>
<organism>
    <name type="scientific">Yersinia pestis bv. Antiqua (strain Angola)</name>
    <dbReference type="NCBI Taxonomy" id="349746"/>
    <lineage>
        <taxon>Bacteria</taxon>
        <taxon>Pseudomonadati</taxon>
        <taxon>Pseudomonadota</taxon>
        <taxon>Gammaproteobacteria</taxon>
        <taxon>Enterobacterales</taxon>
        <taxon>Yersiniaceae</taxon>
        <taxon>Yersinia</taxon>
    </lineage>
</organism>
<reference key="1">
    <citation type="journal article" date="2010" name="J. Bacteriol.">
        <title>Genome sequence of the deep-rooted Yersinia pestis strain Angola reveals new insights into the evolution and pangenome of the plague bacterium.</title>
        <authorList>
            <person name="Eppinger M."/>
            <person name="Worsham P.L."/>
            <person name="Nikolich M.P."/>
            <person name="Riley D.R."/>
            <person name="Sebastian Y."/>
            <person name="Mou S."/>
            <person name="Achtman M."/>
            <person name="Lindler L.E."/>
            <person name="Ravel J."/>
        </authorList>
    </citation>
    <scope>NUCLEOTIDE SEQUENCE [LARGE SCALE GENOMIC DNA]</scope>
    <source>
        <strain>Angola</strain>
    </source>
</reference>
<gene>
    <name type="ordered locus">YpAngola_A0835</name>
</gene>
<keyword id="KW-1003">Cell membrane</keyword>
<keyword id="KW-0472">Membrane</keyword>
<keyword id="KW-0812">Transmembrane</keyword>
<keyword id="KW-1133">Transmembrane helix</keyword>
<evidence type="ECO:0000255" key="1">
    <source>
        <dbReference type="HAMAP-Rule" id="MF_01361"/>
    </source>
</evidence>
<sequence length="53" mass="5723">MFRWGIIFLIIALIEAALGFGGLAGTAAWAAKVVFVVGIILFLISLFTGRKRL</sequence>
<feature type="chain" id="PRO_1000143729" description="UPF0391 membrane protein YpAngola_A0835">
    <location>
        <begin position="1"/>
        <end position="53"/>
    </location>
</feature>
<feature type="transmembrane region" description="Helical" evidence="1">
    <location>
        <begin position="4"/>
        <end position="24"/>
    </location>
</feature>
<feature type="transmembrane region" description="Helical" evidence="1">
    <location>
        <begin position="27"/>
        <end position="47"/>
    </location>
</feature>
<accession>A9R053</accession>
<dbReference type="EMBL" id="CP000901">
    <property type="protein sequence ID" value="ABX85004.1"/>
    <property type="molecule type" value="Genomic_DNA"/>
</dbReference>
<dbReference type="RefSeq" id="WP_002209211.1">
    <property type="nucleotide sequence ID" value="NZ_CP009935.1"/>
</dbReference>
<dbReference type="KEGG" id="ypg:YpAngola_A0835"/>
<dbReference type="PATRIC" id="fig|349746.12.peg.1787"/>
<dbReference type="GO" id="GO:0005886">
    <property type="term" value="C:plasma membrane"/>
    <property type="evidence" value="ECO:0007669"/>
    <property type="project" value="UniProtKB-SubCell"/>
</dbReference>
<dbReference type="HAMAP" id="MF_01361">
    <property type="entry name" value="UPF0391"/>
    <property type="match status" value="1"/>
</dbReference>
<dbReference type="InterPro" id="IPR009760">
    <property type="entry name" value="DUF1328"/>
</dbReference>
<dbReference type="NCBIfam" id="NF010229">
    <property type="entry name" value="PRK13682.1-4"/>
    <property type="match status" value="1"/>
</dbReference>
<dbReference type="NCBIfam" id="NF010230">
    <property type="entry name" value="PRK13682.1-5"/>
    <property type="match status" value="1"/>
</dbReference>
<dbReference type="Pfam" id="PF07043">
    <property type="entry name" value="DUF1328"/>
    <property type="match status" value="1"/>
</dbReference>
<dbReference type="PIRSF" id="PIRSF036466">
    <property type="entry name" value="UCP036466"/>
    <property type="match status" value="1"/>
</dbReference>